<accession>Q5HHQ4</accession>
<name>TRXB_STAAC</name>
<keyword id="KW-0963">Cytoplasm</keyword>
<keyword id="KW-1015">Disulfide bond</keyword>
<keyword id="KW-0274">FAD</keyword>
<keyword id="KW-0285">Flavoprotein</keyword>
<keyword id="KW-0521">NADP</keyword>
<keyword id="KW-0560">Oxidoreductase</keyword>
<keyword id="KW-0676">Redox-active center</keyword>
<gene>
    <name type="primary">trxB</name>
    <name type="ordered locus">SACOL0829</name>
</gene>
<dbReference type="EC" id="1.8.1.9"/>
<dbReference type="EMBL" id="CP000046">
    <property type="protein sequence ID" value="AAW36385.1"/>
    <property type="molecule type" value="Genomic_DNA"/>
</dbReference>
<dbReference type="RefSeq" id="WP_000134963.1">
    <property type="nucleotide sequence ID" value="NZ_JBGOFO010000005.1"/>
</dbReference>
<dbReference type="SMR" id="Q5HHQ4"/>
<dbReference type="KEGG" id="sac:SACOL0829"/>
<dbReference type="HOGENOM" id="CLU_031864_5_1_9"/>
<dbReference type="Proteomes" id="UP000000530">
    <property type="component" value="Chromosome"/>
</dbReference>
<dbReference type="GO" id="GO:0005737">
    <property type="term" value="C:cytoplasm"/>
    <property type="evidence" value="ECO:0007669"/>
    <property type="project" value="UniProtKB-SubCell"/>
</dbReference>
<dbReference type="GO" id="GO:0004791">
    <property type="term" value="F:thioredoxin-disulfide reductase (NADPH) activity"/>
    <property type="evidence" value="ECO:0007669"/>
    <property type="project" value="UniProtKB-EC"/>
</dbReference>
<dbReference type="GO" id="GO:0019430">
    <property type="term" value="P:removal of superoxide radicals"/>
    <property type="evidence" value="ECO:0007669"/>
    <property type="project" value="InterPro"/>
</dbReference>
<dbReference type="Gene3D" id="3.50.50.60">
    <property type="entry name" value="FAD/NAD(P)-binding domain"/>
    <property type="match status" value="2"/>
</dbReference>
<dbReference type="InterPro" id="IPR036188">
    <property type="entry name" value="FAD/NAD-bd_sf"/>
</dbReference>
<dbReference type="InterPro" id="IPR023753">
    <property type="entry name" value="FAD/NAD-binding_dom"/>
</dbReference>
<dbReference type="InterPro" id="IPR050097">
    <property type="entry name" value="Ferredoxin-NADP_redctase_2"/>
</dbReference>
<dbReference type="InterPro" id="IPR008255">
    <property type="entry name" value="Pyr_nucl-diS_OxRdtase_2_AS"/>
</dbReference>
<dbReference type="InterPro" id="IPR005982">
    <property type="entry name" value="Thioredox_Rdtase"/>
</dbReference>
<dbReference type="NCBIfam" id="TIGR01292">
    <property type="entry name" value="TRX_reduct"/>
    <property type="match status" value="1"/>
</dbReference>
<dbReference type="PANTHER" id="PTHR48105">
    <property type="entry name" value="THIOREDOXIN REDUCTASE 1-RELATED-RELATED"/>
    <property type="match status" value="1"/>
</dbReference>
<dbReference type="Pfam" id="PF07992">
    <property type="entry name" value="Pyr_redox_2"/>
    <property type="match status" value="1"/>
</dbReference>
<dbReference type="PRINTS" id="PR00368">
    <property type="entry name" value="FADPNR"/>
</dbReference>
<dbReference type="PRINTS" id="PR00469">
    <property type="entry name" value="PNDRDTASEII"/>
</dbReference>
<dbReference type="SUPFAM" id="SSF51905">
    <property type="entry name" value="FAD/NAD(P)-binding domain"/>
    <property type="match status" value="1"/>
</dbReference>
<dbReference type="PROSITE" id="PS00573">
    <property type="entry name" value="PYRIDINE_REDOX_2"/>
    <property type="match status" value="1"/>
</dbReference>
<feature type="chain" id="PRO_0000166744" description="Thioredoxin reductase">
    <location>
        <begin position="1"/>
        <end position="311"/>
    </location>
</feature>
<feature type="binding site" evidence="2">
    <location>
        <begin position="35"/>
        <end position="42"/>
    </location>
    <ligand>
        <name>FAD</name>
        <dbReference type="ChEBI" id="CHEBI:57692"/>
    </ligand>
</feature>
<feature type="binding site" evidence="2">
    <location>
        <begin position="277"/>
        <end position="286"/>
    </location>
    <ligand>
        <name>FAD</name>
        <dbReference type="ChEBI" id="CHEBI:57692"/>
    </ligand>
</feature>
<feature type="disulfide bond" description="Redox-active" evidence="2">
    <location>
        <begin position="134"/>
        <end position="137"/>
    </location>
</feature>
<organism>
    <name type="scientific">Staphylococcus aureus (strain COL)</name>
    <dbReference type="NCBI Taxonomy" id="93062"/>
    <lineage>
        <taxon>Bacteria</taxon>
        <taxon>Bacillati</taxon>
        <taxon>Bacillota</taxon>
        <taxon>Bacilli</taxon>
        <taxon>Bacillales</taxon>
        <taxon>Staphylococcaceae</taxon>
        <taxon>Staphylococcus</taxon>
    </lineage>
</organism>
<comment type="catalytic activity">
    <reaction>
        <text>[thioredoxin]-dithiol + NADP(+) = [thioredoxin]-disulfide + NADPH + H(+)</text>
        <dbReference type="Rhea" id="RHEA:20345"/>
        <dbReference type="Rhea" id="RHEA-COMP:10698"/>
        <dbReference type="Rhea" id="RHEA-COMP:10700"/>
        <dbReference type="ChEBI" id="CHEBI:15378"/>
        <dbReference type="ChEBI" id="CHEBI:29950"/>
        <dbReference type="ChEBI" id="CHEBI:50058"/>
        <dbReference type="ChEBI" id="CHEBI:57783"/>
        <dbReference type="ChEBI" id="CHEBI:58349"/>
        <dbReference type="EC" id="1.8.1.9"/>
    </reaction>
</comment>
<comment type="cofactor">
    <cofactor evidence="2">
        <name>FAD</name>
        <dbReference type="ChEBI" id="CHEBI:57692"/>
    </cofactor>
    <text evidence="2">Binds 1 FAD per subunit.</text>
</comment>
<comment type="subunit">
    <text evidence="2">Homodimer.</text>
</comment>
<comment type="subcellular location">
    <subcellularLocation>
        <location evidence="1">Cytoplasm</location>
    </subcellularLocation>
</comment>
<comment type="miscellaneous">
    <text>The active site is a redox-active disulfide bond.</text>
</comment>
<comment type="similarity">
    <text evidence="3">Belongs to the class-II pyridine nucleotide-disulfide oxidoreductase family.</text>
</comment>
<protein>
    <recommendedName>
        <fullName>Thioredoxin reductase</fullName>
        <shortName>TRXR</shortName>
        <ecNumber>1.8.1.9</ecNumber>
    </recommendedName>
</protein>
<sequence>MTEIDFDIAIIGAGPAGMTAAVYASRANLKTVMIERGIPGGQMANTEEVENFPGFEMITGPDLSTKMFEHAKKFGAVYQYGDIKSVEDKGEYKVINFGNKELTAKAVIIATGAEYKKIGVPGEQELGGRGVSYCAVCDGAFFKNKRLFVIGGGDSAVEEGTFLTKFADKVTIVHRRDELRAQRILQDRAFKNDKIDFIWSHTLKSINEKDGKVGSVTLTSTKDGSEETHEADGVFIYIGMKPLTAPFKDLGITNDVGYIVTKDDMTTSVPGIFAAGDVRDKGLRQIVTATGDGSIAAQSAAEYIEHLNDQA</sequence>
<proteinExistence type="inferred from homology"/>
<reference key="1">
    <citation type="journal article" date="2005" name="J. Bacteriol.">
        <title>Insights on evolution of virulence and resistance from the complete genome analysis of an early methicillin-resistant Staphylococcus aureus strain and a biofilm-producing methicillin-resistant Staphylococcus epidermidis strain.</title>
        <authorList>
            <person name="Gill S.R."/>
            <person name="Fouts D.E."/>
            <person name="Archer G.L."/>
            <person name="Mongodin E.F."/>
            <person name="DeBoy R.T."/>
            <person name="Ravel J."/>
            <person name="Paulsen I.T."/>
            <person name="Kolonay J.F."/>
            <person name="Brinkac L.M."/>
            <person name="Beanan M.J."/>
            <person name="Dodson R.J."/>
            <person name="Daugherty S.C."/>
            <person name="Madupu R."/>
            <person name="Angiuoli S.V."/>
            <person name="Durkin A.S."/>
            <person name="Haft D.H."/>
            <person name="Vamathevan J.J."/>
            <person name="Khouri H."/>
            <person name="Utterback T.R."/>
            <person name="Lee C."/>
            <person name="Dimitrov G."/>
            <person name="Jiang L."/>
            <person name="Qin H."/>
            <person name="Weidman J."/>
            <person name="Tran K."/>
            <person name="Kang K.H."/>
            <person name="Hance I.R."/>
            <person name="Nelson K.E."/>
            <person name="Fraser C.M."/>
        </authorList>
    </citation>
    <scope>NUCLEOTIDE SEQUENCE [LARGE SCALE GENOMIC DNA]</scope>
    <source>
        <strain>COL</strain>
    </source>
</reference>
<evidence type="ECO:0000250" key="1"/>
<evidence type="ECO:0000250" key="2">
    <source>
        <dbReference type="UniProtKB" id="P0A9P4"/>
    </source>
</evidence>
<evidence type="ECO:0000305" key="3"/>